<sequence length="108" mass="12557">MELQFDEKGLIPVITQDVKTKEVLMLAYANEEAIKLTLKTGFAHYWSRSRKKLWKKGETSGNVQRVVEIRYDCDCDALLYLVEQKGNACHTGNYSCFYRRLEGDEVRC</sequence>
<feature type="chain" id="PRO_0000136504" description="Phosphoribosyl-AMP cyclohydrolase">
    <location>
        <begin position="1"/>
        <end position="108"/>
    </location>
</feature>
<feature type="binding site" evidence="1">
    <location>
        <position position="72"/>
    </location>
    <ligand>
        <name>Mg(2+)</name>
        <dbReference type="ChEBI" id="CHEBI:18420"/>
    </ligand>
</feature>
<feature type="binding site" evidence="1">
    <location>
        <position position="73"/>
    </location>
    <ligand>
        <name>Zn(2+)</name>
        <dbReference type="ChEBI" id="CHEBI:29105"/>
        <note>ligand shared between dimeric partners</note>
    </ligand>
</feature>
<feature type="binding site" evidence="1">
    <location>
        <position position="74"/>
    </location>
    <ligand>
        <name>Mg(2+)</name>
        <dbReference type="ChEBI" id="CHEBI:18420"/>
    </ligand>
</feature>
<feature type="binding site" evidence="1">
    <location>
        <position position="76"/>
    </location>
    <ligand>
        <name>Mg(2+)</name>
        <dbReference type="ChEBI" id="CHEBI:18420"/>
    </ligand>
</feature>
<feature type="binding site" evidence="1">
    <location>
        <position position="89"/>
    </location>
    <ligand>
        <name>Zn(2+)</name>
        <dbReference type="ChEBI" id="CHEBI:29105"/>
        <note>ligand shared between dimeric partners</note>
    </ligand>
</feature>
<feature type="binding site" evidence="1">
    <location>
        <position position="96"/>
    </location>
    <ligand>
        <name>Zn(2+)</name>
        <dbReference type="ChEBI" id="CHEBI:29105"/>
        <note>ligand shared between dimeric partners</note>
    </ligand>
</feature>
<evidence type="ECO:0000255" key="1">
    <source>
        <dbReference type="HAMAP-Rule" id="MF_01021"/>
    </source>
</evidence>
<protein>
    <recommendedName>
        <fullName evidence="1">Phosphoribosyl-AMP cyclohydrolase</fullName>
        <shortName evidence="1">PRA-CH</shortName>
        <ecNumber evidence="1">3.5.4.19</ecNumber>
    </recommendedName>
</protein>
<organism>
    <name type="scientific">Archaeoglobus fulgidus (strain ATCC 49558 / DSM 4304 / JCM 9628 / NBRC 100126 / VC-16)</name>
    <dbReference type="NCBI Taxonomy" id="224325"/>
    <lineage>
        <taxon>Archaea</taxon>
        <taxon>Methanobacteriati</taxon>
        <taxon>Methanobacteriota</taxon>
        <taxon>Archaeoglobi</taxon>
        <taxon>Archaeoglobales</taxon>
        <taxon>Archaeoglobaceae</taxon>
        <taxon>Archaeoglobus</taxon>
    </lineage>
</organism>
<keyword id="KW-0028">Amino-acid biosynthesis</keyword>
<keyword id="KW-0963">Cytoplasm</keyword>
<keyword id="KW-0368">Histidine biosynthesis</keyword>
<keyword id="KW-0378">Hydrolase</keyword>
<keyword id="KW-0460">Magnesium</keyword>
<keyword id="KW-0479">Metal-binding</keyword>
<keyword id="KW-1185">Reference proteome</keyword>
<keyword id="KW-0862">Zinc</keyword>
<reference key="1">
    <citation type="journal article" date="1997" name="Nature">
        <title>The complete genome sequence of the hyperthermophilic, sulphate-reducing archaeon Archaeoglobus fulgidus.</title>
        <authorList>
            <person name="Klenk H.-P."/>
            <person name="Clayton R.A."/>
            <person name="Tomb J.-F."/>
            <person name="White O."/>
            <person name="Nelson K.E."/>
            <person name="Ketchum K.A."/>
            <person name="Dodson R.J."/>
            <person name="Gwinn M.L."/>
            <person name="Hickey E.K."/>
            <person name="Peterson J.D."/>
            <person name="Richardson D.L."/>
            <person name="Kerlavage A.R."/>
            <person name="Graham D.E."/>
            <person name="Kyrpides N.C."/>
            <person name="Fleischmann R.D."/>
            <person name="Quackenbush J."/>
            <person name="Lee N.H."/>
            <person name="Sutton G.G."/>
            <person name="Gill S.R."/>
            <person name="Kirkness E.F."/>
            <person name="Dougherty B.A."/>
            <person name="McKenney K."/>
            <person name="Adams M.D."/>
            <person name="Loftus B.J."/>
            <person name="Peterson S.N."/>
            <person name="Reich C.I."/>
            <person name="McNeil L.K."/>
            <person name="Badger J.H."/>
            <person name="Glodek A."/>
            <person name="Zhou L."/>
            <person name="Overbeek R."/>
            <person name="Gocayne J.D."/>
            <person name="Weidman J.F."/>
            <person name="McDonald L.A."/>
            <person name="Utterback T.R."/>
            <person name="Cotton M.D."/>
            <person name="Spriggs T."/>
            <person name="Artiach P."/>
            <person name="Kaine B.P."/>
            <person name="Sykes S.M."/>
            <person name="Sadow P.W."/>
            <person name="D'Andrea K.P."/>
            <person name="Bowman C."/>
            <person name="Fujii C."/>
            <person name="Garland S.A."/>
            <person name="Mason T.M."/>
            <person name="Olsen G.J."/>
            <person name="Fraser C.M."/>
            <person name="Smith H.O."/>
            <person name="Woese C.R."/>
            <person name="Venter J.C."/>
        </authorList>
    </citation>
    <scope>NUCLEOTIDE SEQUENCE [LARGE SCALE GENOMIC DNA]</scope>
    <source>
        <strain>ATCC 49558 / DSM 4304 / JCM 9628 / NBRC 100126 / VC-16</strain>
    </source>
</reference>
<dbReference type="EC" id="3.5.4.19" evidence="1"/>
<dbReference type="EMBL" id="AE000782">
    <property type="protein sequence ID" value="AAB89305.1"/>
    <property type="molecule type" value="Genomic_DNA"/>
</dbReference>
<dbReference type="PIR" id="E69493">
    <property type="entry name" value="E69493"/>
</dbReference>
<dbReference type="RefSeq" id="WP_010879442.1">
    <property type="nucleotide sequence ID" value="NC_000917.1"/>
</dbReference>
<dbReference type="SMR" id="O28329"/>
<dbReference type="STRING" id="224325.AF_1950"/>
<dbReference type="PaxDb" id="224325-AF_1950"/>
<dbReference type="EnsemblBacteria" id="AAB89305">
    <property type="protein sequence ID" value="AAB89305"/>
    <property type="gene ID" value="AF_1950"/>
</dbReference>
<dbReference type="GeneID" id="24795692"/>
<dbReference type="KEGG" id="afu:AF_1950"/>
<dbReference type="eggNOG" id="arCOG02676">
    <property type="taxonomic scope" value="Archaea"/>
</dbReference>
<dbReference type="HOGENOM" id="CLU_048577_5_3_2"/>
<dbReference type="OrthoDB" id="5853at2157"/>
<dbReference type="PhylomeDB" id="O28329"/>
<dbReference type="UniPathway" id="UPA00031">
    <property type="reaction ID" value="UER00008"/>
</dbReference>
<dbReference type="Proteomes" id="UP000002199">
    <property type="component" value="Chromosome"/>
</dbReference>
<dbReference type="GO" id="GO:0005737">
    <property type="term" value="C:cytoplasm"/>
    <property type="evidence" value="ECO:0007669"/>
    <property type="project" value="UniProtKB-SubCell"/>
</dbReference>
<dbReference type="GO" id="GO:0000287">
    <property type="term" value="F:magnesium ion binding"/>
    <property type="evidence" value="ECO:0007669"/>
    <property type="project" value="UniProtKB-UniRule"/>
</dbReference>
<dbReference type="GO" id="GO:0004635">
    <property type="term" value="F:phosphoribosyl-AMP cyclohydrolase activity"/>
    <property type="evidence" value="ECO:0007669"/>
    <property type="project" value="UniProtKB-UniRule"/>
</dbReference>
<dbReference type="GO" id="GO:0008270">
    <property type="term" value="F:zinc ion binding"/>
    <property type="evidence" value="ECO:0007669"/>
    <property type="project" value="UniProtKB-UniRule"/>
</dbReference>
<dbReference type="GO" id="GO:0000105">
    <property type="term" value="P:L-histidine biosynthetic process"/>
    <property type="evidence" value="ECO:0007669"/>
    <property type="project" value="UniProtKB-UniRule"/>
</dbReference>
<dbReference type="FunFam" id="3.10.20.810:FF:000001">
    <property type="entry name" value="Histidine biosynthesis bifunctional protein HisIE"/>
    <property type="match status" value="1"/>
</dbReference>
<dbReference type="Gene3D" id="4.10.80.70">
    <property type="match status" value="1"/>
</dbReference>
<dbReference type="Gene3D" id="3.10.20.810">
    <property type="entry name" value="Phosphoribosyl-AMP cyclohydrolase"/>
    <property type="match status" value="1"/>
</dbReference>
<dbReference type="HAMAP" id="MF_01021">
    <property type="entry name" value="HisI"/>
    <property type="match status" value="1"/>
</dbReference>
<dbReference type="InterPro" id="IPR026660">
    <property type="entry name" value="PRA-CH"/>
</dbReference>
<dbReference type="InterPro" id="IPR002496">
    <property type="entry name" value="PRib_AMP_CycHydrolase_dom"/>
</dbReference>
<dbReference type="InterPro" id="IPR038019">
    <property type="entry name" value="PRib_AMP_CycHydrolase_sf"/>
</dbReference>
<dbReference type="NCBIfam" id="NF000768">
    <property type="entry name" value="PRK00051.1"/>
    <property type="match status" value="1"/>
</dbReference>
<dbReference type="PANTHER" id="PTHR42945">
    <property type="entry name" value="HISTIDINE BIOSYNTHESIS BIFUNCTIONAL PROTEIN"/>
    <property type="match status" value="1"/>
</dbReference>
<dbReference type="PANTHER" id="PTHR42945:SF1">
    <property type="entry name" value="HISTIDINE BIOSYNTHESIS BIFUNCTIONAL PROTEIN HIS7"/>
    <property type="match status" value="1"/>
</dbReference>
<dbReference type="Pfam" id="PF01502">
    <property type="entry name" value="PRA-CH"/>
    <property type="match status" value="1"/>
</dbReference>
<dbReference type="SUPFAM" id="SSF141734">
    <property type="entry name" value="HisI-like"/>
    <property type="match status" value="1"/>
</dbReference>
<accession>O28329</accession>
<name>HIS3_ARCFU</name>
<proteinExistence type="inferred from homology"/>
<comment type="function">
    <text evidence="1">Catalyzes the hydrolysis of the adenine ring of phosphoribosyl-AMP.</text>
</comment>
<comment type="catalytic activity">
    <reaction evidence="1">
        <text>1-(5-phospho-beta-D-ribosyl)-5'-AMP + H2O = 1-(5-phospho-beta-D-ribosyl)-5-[(5-phospho-beta-D-ribosylamino)methylideneamino]imidazole-4-carboxamide</text>
        <dbReference type="Rhea" id="RHEA:20049"/>
        <dbReference type="ChEBI" id="CHEBI:15377"/>
        <dbReference type="ChEBI" id="CHEBI:58435"/>
        <dbReference type="ChEBI" id="CHEBI:59457"/>
        <dbReference type="EC" id="3.5.4.19"/>
    </reaction>
</comment>
<comment type="cofactor">
    <cofactor evidence="1">
        <name>Mg(2+)</name>
        <dbReference type="ChEBI" id="CHEBI:18420"/>
    </cofactor>
    <text evidence="1">Binds 1 Mg(2+) ion per subunit.</text>
</comment>
<comment type="cofactor">
    <cofactor evidence="1">
        <name>Zn(2+)</name>
        <dbReference type="ChEBI" id="CHEBI:29105"/>
    </cofactor>
    <text evidence="1">Binds 1 zinc ion per subunit.</text>
</comment>
<comment type="pathway">
    <text evidence="1">Amino-acid biosynthesis; L-histidine biosynthesis; L-histidine from 5-phospho-alpha-D-ribose 1-diphosphate: step 3/9.</text>
</comment>
<comment type="subunit">
    <text evidence="1">Homodimer.</text>
</comment>
<comment type="subcellular location">
    <subcellularLocation>
        <location evidence="1">Cytoplasm</location>
    </subcellularLocation>
</comment>
<comment type="similarity">
    <text evidence="1">Belongs to the PRA-CH family.</text>
</comment>
<gene>
    <name evidence="1" type="primary">hisI</name>
    <name type="ordered locus">AF_1950</name>
</gene>